<evidence type="ECO:0000305" key="1"/>
<proteinExistence type="inferred from homology"/>
<accession>Q196Z9</accession>
<reference key="1">
    <citation type="journal article" date="2006" name="J. Virol.">
        <title>Genome of invertebrate iridescent virus type 3 (mosquito iridescent virus).</title>
        <authorList>
            <person name="Delhon G."/>
            <person name="Tulman E.R."/>
            <person name="Afonso C.L."/>
            <person name="Lu Z."/>
            <person name="Becnel J.J."/>
            <person name="Moser B.A."/>
            <person name="Kutish G.F."/>
            <person name="Rock D.L."/>
        </authorList>
    </citation>
    <scope>NUCLEOTIDE SEQUENCE [LARGE SCALE GENOMIC DNA]</scope>
</reference>
<dbReference type="EMBL" id="DQ643392">
    <property type="protein sequence ID" value="ABF82091.1"/>
    <property type="molecule type" value="Genomic_DNA"/>
</dbReference>
<dbReference type="RefSeq" id="YP_654633.1">
    <property type="nucleotide sequence ID" value="NC_008187.1"/>
</dbReference>
<dbReference type="KEGG" id="vg:4156311"/>
<dbReference type="OrthoDB" id="10492at10239"/>
<dbReference type="Proteomes" id="UP000001358">
    <property type="component" value="Genome"/>
</dbReference>
<keyword id="KW-1185">Reference proteome</keyword>
<comment type="similarity">
    <text evidence="1">Belongs to the IIV-6 467R family.</text>
</comment>
<name>VF467_IIV3</name>
<organism>
    <name type="scientific">Invertebrate iridescent virus 3</name>
    <name type="common">IIV-3</name>
    <name type="synonym">Mosquito iridescent virus</name>
    <dbReference type="NCBI Taxonomy" id="345201"/>
    <lineage>
        <taxon>Viruses</taxon>
        <taxon>Varidnaviria</taxon>
        <taxon>Bamfordvirae</taxon>
        <taxon>Nucleocytoviricota</taxon>
        <taxon>Megaviricetes</taxon>
        <taxon>Pimascovirales</taxon>
        <taxon>Iridoviridae</taxon>
        <taxon>Betairidovirinae</taxon>
        <taxon>Chloriridovirus</taxon>
    </lineage>
</organism>
<gene>
    <name type="ORF">IIV3-061R</name>
</gene>
<protein>
    <recommendedName>
        <fullName>Uncharacterized protein 061R</fullName>
    </recommendedName>
</protein>
<organismHost>
    <name type="scientific">Aedes vexans</name>
    <name type="common">Inland floodwater mosquito</name>
    <name type="synonym">Culex vexans</name>
    <dbReference type="NCBI Taxonomy" id="7163"/>
</organismHost>
<organismHost>
    <name type="scientific">Culex territans</name>
    <dbReference type="NCBI Taxonomy" id="42431"/>
</organismHost>
<organismHost>
    <name type="scientific">Culiseta annulata</name>
    <dbReference type="NCBI Taxonomy" id="332058"/>
</organismHost>
<organismHost>
    <name type="scientific">Ochlerotatus sollicitans</name>
    <name type="common">eastern saltmarsh mosquito</name>
    <dbReference type="NCBI Taxonomy" id="310513"/>
</organismHost>
<organismHost>
    <name type="scientific">Ochlerotatus taeniorhynchus</name>
    <name type="common">Black salt marsh mosquito</name>
    <name type="synonym">Aedes taeniorhynchus</name>
    <dbReference type="NCBI Taxonomy" id="329105"/>
</organismHost>
<organismHost>
    <name type="scientific">Psorophora ferox</name>
    <dbReference type="NCBI Taxonomy" id="7183"/>
</organismHost>
<feature type="chain" id="PRO_0000377799" description="Uncharacterized protein 061R">
    <location>
        <begin position="1"/>
        <end position="488"/>
    </location>
</feature>
<sequence length="488" mass="55812">MNETVVADPMAQANPASVFDLGLPCSTRYRLLKAMDPQDQYEACRQLLDIWRISNIKKLEKFFLWICVYDVVLNLHLKYDILELIITTTIVPPVGTVKFHRTEHAAANVLYLVQERAFDSDQYWVVLKKILHLYRTAFGLDKVDKVLRNLIAVGFRKQGLANPFGKIFPLVLEFKQCPFFVDLCAFIFDTCGAKLSVKNRLLLLQILYTDENRFMDPLVQLVHQCPQLNFRLEACDILYGNGSDEVKKKAKRWIKTLLPDGGDYVQNPENVHLDSVANSVDETLKILVEKNRKKTAPDNLYALLCHHFEKSEKIVASLTRIFQYDFLKFSSLNLTLGEVLAQIYLTIDGQPEAVRDQLMVRLGQELRDAYDTCSKGYVTRLVNVVSGFNLYGESSLGICTSIEDEIYHLYSTTVNGLVQNSPANVRDTLIQQLAVPPDQSAERRELIEFLRPNWSLIWTTIQNRFAGDVCPNQLDLHCRNAMAKYDGN</sequence>